<comment type="similarity">
    <text evidence="2">Belongs to the yippee family.</text>
</comment>
<comment type="sequence caution" evidence="2">
    <conflict type="erroneous gene model prediction">
        <sequence resource="EMBL-CDS" id="CAB38286"/>
    </conflict>
    <text>The predicted gene At4g27740 has been split into 2 genes: At4g27740 and At4g27745.</text>
</comment>
<comment type="sequence caution" evidence="2">
    <conflict type="erroneous gene model prediction">
        <sequence resource="EMBL-CDS" id="CAB81424"/>
    </conflict>
    <text>The predicted gene At4g27740 has been split into 2 genes: At4g27740 and At4g27745.</text>
</comment>
<evidence type="ECO:0000255" key="1">
    <source>
        <dbReference type="PROSITE-ProRule" id="PRU01128"/>
    </source>
</evidence>
<evidence type="ECO:0000305" key="2"/>
<gene>
    <name type="ordered locus">At4g27740</name>
    <name type="ORF">T29A15.230</name>
</gene>
<feature type="chain" id="PRO_0000289975" description="Protein yippee-like At4g27740">
    <location>
        <begin position="1"/>
        <end position="105"/>
    </location>
</feature>
<feature type="domain" description="Yippee" evidence="1">
    <location>
        <begin position="8"/>
        <end position="105"/>
    </location>
</feature>
<feature type="binding site" evidence="1">
    <location>
        <position position="12"/>
    </location>
    <ligand>
        <name>Zn(2+)</name>
        <dbReference type="ChEBI" id="CHEBI:29105"/>
    </ligand>
</feature>
<feature type="binding site" evidence="1">
    <location>
        <position position="15"/>
    </location>
    <ligand>
        <name>Zn(2+)</name>
        <dbReference type="ChEBI" id="CHEBI:29105"/>
    </ligand>
</feature>
<feature type="binding site" evidence="1">
    <location>
        <position position="68"/>
    </location>
    <ligand>
        <name>Zn(2+)</name>
        <dbReference type="ChEBI" id="CHEBI:29105"/>
    </ligand>
</feature>
<feature type="binding site" evidence="1">
    <location>
        <position position="71"/>
    </location>
    <ligand>
        <name>Zn(2+)</name>
        <dbReference type="ChEBI" id="CHEBI:29105"/>
    </ligand>
</feature>
<reference key="1">
    <citation type="journal article" date="1999" name="Nature">
        <title>Sequence and analysis of chromosome 4 of the plant Arabidopsis thaliana.</title>
        <authorList>
            <person name="Mayer K.F.X."/>
            <person name="Schueller C."/>
            <person name="Wambutt R."/>
            <person name="Murphy G."/>
            <person name="Volckaert G."/>
            <person name="Pohl T."/>
            <person name="Duesterhoeft A."/>
            <person name="Stiekema W."/>
            <person name="Entian K.-D."/>
            <person name="Terryn N."/>
            <person name="Harris B."/>
            <person name="Ansorge W."/>
            <person name="Brandt P."/>
            <person name="Grivell L.A."/>
            <person name="Rieger M."/>
            <person name="Weichselgartner M."/>
            <person name="de Simone V."/>
            <person name="Obermaier B."/>
            <person name="Mache R."/>
            <person name="Mueller M."/>
            <person name="Kreis M."/>
            <person name="Delseny M."/>
            <person name="Puigdomenech P."/>
            <person name="Watson M."/>
            <person name="Schmidtheini T."/>
            <person name="Reichert B."/>
            <person name="Portetelle D."/>
            <person name="Perez-Alonso M."/>
            <person name="Boutry M."/>
            <person name="Bancroft I."/>
            <person name="Vos P."/>
            <person name="Hoheisel J."/>
            <person name="Zimmermann W."/>
            <person name="Wedler H."/>
            <person name="Ridley P."/>
            <person name="Langham S.-A."/>
            <person name="McCullagh B."/>
            <person name="Bilham L."/>
            <person name="Robben J."/>
            <person name="van der Schueren J."/>
            <person name="Grymonprez B."/>
            <person name="Chuang Y.-J."/>
            <person name="Vandenbussche F."/>
            <person name="Braeken M."/>
            <person name="Weltjens I."/>
            <person name="Voet M."/>
            <person name="Bastiaens I."/>
            <person name="Aert R."/>
            <person name="Defoor E."/>
            <person name="Weitzenegger T."/>
            <person name="Bothe G."/>
            <person name="Ramsperger U."/>
            <person name="Hilbert H."/>
            <person name="Braun M."/>
            <person name="Holzer E."/>
            <person name="Brandt A."/>
            <person name="Peters S."/>
            <person name="van Staveren M."/>
            <person name="Dirkse W."/>
            <person name="Mooijman P."/>
            <person name="Klein Lankhorst R."/>
            <person name="Rose M."/>
            <person name="Hauf J."/>
            <person name="Koetter P."/>
            <person name="Berneiser S."/>
            <person name="Hempel S."/>
            <person name="Feldpausch M."/>
            <person name="Lamberth S."/>
            <person name="Van den Daele H."/>
            <person name="De Keyser A."/>
            <person name="Buysshaert C."/>
            <person name="Gielen J."/>
            <person name="Villarroel R."/>
            <person name="De Clercq R."/>
            <person name="van Montagu M."/>
            <person name="Rogers J."/>
            <person name="Cronin A."/>
            <person name="Quail M.A."/>
            <person name="Bray-Allen S."/>
            <person name="Clark L."/>
            <person name="Doggett J."/>
            <person name="Hall S."/>
            <person name="Kay M."/>
            <person name="Lennard N."/>
            <person name="McLay K."/>
            <person name="Mayes R."/>
            <person name="Pettett A."/>
            <person name="Rajandream M.A."/>
            <person name="Lyne M."/>
            <person name="Benes V."/>
            <person name="Rechmann S."/>
            <person name="Borkova D."/>
            <person name="Bloecker H."/>
            <person name="Scharfe M."/>
            <person name="Grimm M."/>
            <person name="Loehnert T.-H."/>
            <person name="Dose S."/>
            <person name="de Haan M."/>
            <person name="Maarse A.C."/>
            <person name="Schaefer M."/>
            <person name="Mueller-Auer S."/>
            <person name="Gabel C."/>
            <person name="Fuchs M."/>
            <person name="Fartmann B."/>
            <person name="Granderath K."/>
            <person name="Dauner D."/>
            <person name="Herzl A."/>
            <person name="Neumann S."/>
            <person name="Argiriou A."/>
            <person name="Vitale D."/>
            <person name="Liguori R."/>
            <person name="Piravandi E."/>
            <person name="Massenet O."/>
            <person name="Quigley F."/>
            <person name="Clabauld G."/>
            <person name="Muendlein A."/>
            <person name="Felber R."/>
            <person name="Schnabl S."/>
            <person name="Hiller R."/>
            <person name="Schmidt W."/>
            <person name="Lecharny A."/>
            <person name="Aubourg S."/>
            <person name="Chefdor F."/>
            <person name="Cooke R."/>
            <person name="Berger C."/>
            <person name="Monfort A."/>
            <person name="Casacuberta E."/>
            <person name="Gibbons T."/>
            <person name="Weber N."/>
            <person name="Vandenbol M."/>
            <person name="Bargues M."/>
            <person name="Terol J."/>
            <person name="Torres A."/>
            <person name="Perez-Perez A."/>
            <person name="Purnelle B."/>
            <person name="Bent E."/>
            <person name="Johnson S."/>
            <person name="Tacon D."/>
            <person name="Jesse T."/>
            <person name="Heijnen L."/>
            <person name="Schwarz S."/>
            <person name="Scholler P."/>
            <person name="Heber S."/>
            <person name="Francs P."/>
            <person name="Bielke C."/>
            <person name="Frishman D."/>
            <person name="Haase D."/>
            <person name="Lemcke K."/>
            <person name="Mewes H.-W."/>
            <person name="Stocker S."/>
            <person name="Zaccaria P."/>
            <person name="Bevan M."/>
            <person name="Wilson R.K."/>
            <person name="de la Bastide M."/>
            <person name="Habermann K."/>
            <person name="Parnell L."/>
            <person name="Dedhia N."/>
            <person name="Gnoj L."/>
            <person name="Schutz K."/>
            <person name="Huang E."/>
            <person name="Spiegel L."/>
            <person name="Sekhon M."/>
            <person name="Murray J."/>
            <person name="Sheet P."/>
            <person name="Cordes M."/>
            <person name="Abu-Threideh J."/>
            <person name="Stoneking T."/>
            <person name="Kalicki J."/>
            <person name="Graves T."/>
            <person name="Harmon G."/>
            <person name="Edwards J."/>
            <person name="Latreille P."/>
            <person name="Courtney L."/>
            <person name="Cloud J."/>
            <person name="Abbott A."/>
            <person name="Scott K."/>
            <person name="Johnson D."/>
            <person name="Minx P."/>
            <person name="Bentley D."/>
            <person name="Fulton B."/>
            <person name="Miller N."/>
            <person name="Greco T."/>
            <person name="Kemp K."/>
            <person name="Kramer J."/>
            <person name="Fulton L."/>
            <person name="Mardis E."/>
            <person name="Dante M."/>
            <person name="Pepin K."/>
            <person name="Hillier L.W."/>
            <person name="Nelson J."/>
            <person name="Spieth J."/>
            <person name="Ryan E."/>
            <person name="Andrews S."/>
            <person name="Geisel C."/>
            <person name="Layman D."/>
            <person name="Du H."/>
            <person name="Ali J."/>
            <person name="Berghoff A."/>
            <person name="Jones K."/>
            <person name="Drone K."/>
            <person name="Cotton M."/>
            <person name="Joshu C."/>
            <person name="Antonoiu B."/>
            <person name="Zidanic M."/>
            <person name="Strong C."/>
            <person name="Sun H."/>
            <person name="Lamar B."/>
            <person name="Yordan C."/>
            <person name="Ma P."/>
            <person name="Zhong J."/>
            <person name="Preston R."/>
            <person name="Vil D."/>
            <person name="Shekher M."/>
            <person name="Matero A."/>
            <person name="Shah R."/>
            <person name="Swaby I.K."/>
            <person name="O'Shaughnessy A."/>
            <person name="Rodriguez M."/>
            <person name="Hoffman J."/>
            <person name="Till S."/>
            <person name="Granat S."/>
            <person name="Shohdy N."/>
            <person name="Hasegawa A."/>
            <person name="Hameed A."/>
            <person name="Lodhi M."/>
            <person name="Johnson A."/>
            <person name="Chen E."/>
            <person name="Marra M.A."/>
            <person name="Martienssen R."/>
            <person name="McCombie W.R."/>
        </authorList>
    </citation>
    <scope>NUCLEOTIDE SEQUENCE [LARGE SCALE GENOMIC DNA]</scope>
    <source>
        <strain>cv. Columbia</strain>
    </source>
</reference>
<reference key="2">
    <citation type="journal article" date="2017" name="Plant J.">
        <title>Araport11: a complete reannotation of the Arabidopsis thaliana reference genome.</title>
        <authorList>
            <person name="Cheng C.Y."/>
            <person name="Krishnakumar V."/>
            <person name="Chan A.P."/>
            <person name="Thibaud-Nissen F."/>
            <person name="Schobel S."/>
            <person name="Town C.D."/>
        </authorList>
    </citation>
    <scope>GENOME REANNOTATION</scope>
    <source>
        <strain>cv. Columbia</strain>
    </source>
</reference>
<reference key="3">
    <citation type="submission" date="2006-07" db="EMBL/GenBank/DDBJ databases">
        <title>Large-scale analysis of RIKEN Arabidopsis full-length (RAFL) cDNAs.</title>
        <authorList>
            <person name="Totoki Y."/>
            <person name="Seki M."/>
            <person name="Ishida J."/>
            <person name="Nakajima M."/>
            <person name="Enju A."/>
            <person name="Kamiya A."/>
            <person name="Narusaka M."/>
            <person name="Shin-i T."/>
            <person name="Nakagawa M."/>
            <person name="Sakamoto N."/>
            <person name="Oishi K."/>
            <person name="Kohara Y."/>
            <person name="Kobayashi M."/>
            <person name="Toyoda A."/>
            <person name="Sakaki Y."/>
            <person name="Sakurai T."/>
            <person name="Iida K."/>
            <person name="Akiyama K."/>
            <person name="Satou M."/>
            <person name="Toyoda T."/>
            <person name="Konagaya A."/>
            <person name="Carninci P."/>
            <person name="Kawai J."/>
            <person name="Hayashizaki Y."/>
            <person name="Shinozaki K."/>
        </authorList>
    </citation>
    <scope>NUCLEOTIDE SEQUENCE [LARGE SCALE MRNA]</scope>
    <source>
        <strain>cv. Columbia</strain>
    </source>
</reference>
<accession>Q2V3E2</accession>
<sequence>MAANKTLPTYFCRNCENPLALGEDLISKKFVGASGPAFMFSHAMNVVVGPKIGRKLITGSYVVADVMCSKCGETLGWKYVETFDLKQRYKEGMFVIEKLKLTKRY</sequence>
<dbReference type="EMBL" id="AL035602">
    <property type="protein sequence ID" value="CAB38286.1"/>
    <property type="status" value="ALT_SEQ"/>
    <property type="molecule type" value="Genomic_DNA"/>
</dbReference>
<dbReference type="EMBL" id="AL161571">
    <property type="protein sequence ID" value="CAB81424.1"/>
    <property type="status" value="ALT_SEQ"/>
    <property type="molecule type" value="Genomic_DNA"/>
</dbReference>
<dbReference type="EMBL" id="CP002687">
    <property type="protein sequence ID" value="AEE85387.1"/>
    <property type="molecule type" value="Genomic_DNA"/>
</dbReference>
<dbReference type="EMBL" id="AK229353">
    <property type="protein sequence ID" value="BAF01216.1"/>
    <property type="molecule type" value="mRNA"/>
</dbReference>
<dbReference type="PIR" id="T05879">
    <property type="entry name" value="T05879"/>
</dbReference>
<dbReference type="RefSeq" id="NP_194504.2">
    <property type="nucleotide sequence ID" value="NM_118913.5"/>
</dbReference>
<dbReference type="SMR" id="Q2V3E2"/>
<dbReference type="FunCoup" id="Q2V3E2">
    <property type="interactions" value="75"/>
</dbReference>
<dbReference type="STRING" id="3702.Q2V3E2"/>
<dbReference type="PaxDb" id="3702-AT4G27740.1"/>
<dbReference type="ProteomicsDB" id="242917"/>
<dbReference type="EnsemblPlants" id="AT4G27740.1">
    <property type="protein sequence ID" value="AT4G27740.1"/>
    <property type="gene ID" value="AT4G27740"/>
</dbReference>
<dbReference type="GeneID" id="828888"/>
<dbReference type="Gramene" id="AT4G27740.1">
    <property type="protein sequence ID" value="AT4G27740.1"/>
    <property type="gene ID" value="AT4G27740"/>
</dbReference>
<dbReference type="KEGG" id="ath:AT4G27740"/>
<dbReference type="Araport" id="AT4G27740"/>
<dbReference type="TAIR" id="AT4G27740"/>
<dbReference type="eggNOG" id="KOG3399">
    <property type="taxonomic scope" value="Eukaryota"/>
</dbReference>
<dbReference type="HOGENOM" id="CLU_043857_5_2_1"/>
<dbReference type="InParanoid" id="Q2V3E2"/>
<dbReference type="OMA" id="WKYVQAY"/>
<dbReference type="OrthoDB" id="6407410at2759"/>
<dbReference type="PhylomeDB" id="Q2V3E2"/>
<dbReference type="PRO" id="PR:Q2V3E2"/>
<dbReference type="Proteomes" id="UP000006548">
    <property type="component" value="Chromosome 4"/>
</dbReference>
<dbReference type="ExpressionAtlas" id="Q2V3E2">
    <property type="expression patterns" value="baseline and differential"/>
</dbReference>
<dbReference type="GO" id="GO:0005886">
    <property type="term" value="C:plasma membrane"/>
    <property type="evidence" value="ECO:0007005"/>
    <property type="project" value="TAIR"/>
</dbReference>
<dbReference type="GO" id="GO:0046872">
    <property type="term" value="F:metal ion binding"/>
    <property type="evidence" value="ECO:0007669"/>
    <property type="project" value="UniProtKB-KW"/>
</dbReference>
<dbReference type="InterPro" id="IPR034751">
    <property type="entry name" value="Yippee"/>
</dbReference>
<dbReference type="InterPro" id="IPR004910">
    <property type="entry name" value="Yippee/Mis18/Cereblon"/>
</dbReference>
<dbReference type="InterPro" id="IPR039058">
    <property type="entry name" value="Yippee_fam"/>
</dbReference>
<dbReference type="PANTHER" id="PTHR13848">
    <property type="entry name" value="PROTEIN YIPPEE-LIKE CG15309-RELATED"/>
    <property type="match status" value="1"/>
</dbReference>
<dbReference type="Pfam" id="PF03226">
    <property type="entry name" value="Yippee-Mis18"/>
    <property type="match status" value="1"/>
</dbReference>
<dbReference type="PROSITE" id="PS51792">
    <property type="entry name" value="YIPPEE"/>
    <property type="match status" value="1"/>
</dbReference>
<organism>
    <name type="scientific">Arabidopsis thaliana</name>
    <name type="common">Mouse-ear cress</name>
    <dbReference type="NCBI Taxonomy" id="3702"/>
    <lineage>
        <taxon>Eukaryota</taxon>
        <taxon>Viridiplantae</taxon>
        <taxon>Streptophyta</taxon>
        <taxon>Embryophyta</taxon>
        <taxon>Tracheophyta</taxon>
        <taxon>Spermatophyta</taxon>
        <taxon>Magnoliopsida</taxon>
        <taxon>eudicotyledons</taxon>
        <taxon>Gunneridae</taxon>
        <taxon>Pentapetalae</taxon>
        <taxon>rosids</taxon>
        <taxon>malvids</taxon>
        <taxon>Brassicales</taxon>
        <taxon>Brassicaceae</taxon>
        <taxon>Camelineae</taxon>
        <taxon>Arabidopsis</taxon>
    </lineage>
</organism>
<proteinExistence type="inferred from homology"/>
<keyword id="KW-0479">Metal-binding</keyword>
<keyword id="KW-1185">Reference proteome</keyword>
<keyword id="KW-0862">Zinc</keyword>
<protein>
    <recommendedName>
        <fullName>Protein yippee-like At4g27740</fullName>
    </recommendedName>
</protein>
<name>YIPL5_ARATH</name>